<dbReference type="EMBL" id="Y14705">
    <property type="protein sequence ID" value="CAA75007.1"/>
    <property type="molecule type" value="Genomic_DNA"/>
</dbReference>
<dbReference type="EMBL" id="Y11433">
    <property type="protein sequence ID" value="CAA72241.1"/>
    <property type="molecule type" value="mRNA"/>
</dbReference>
<dbReference type="RefSeq" id="NP_113868.1">
    <property type="nucleotide sequence ID" value="NM_031680.1"/>
</dbReference>
<dbReference type="RefSeq" id="XP_006257155.1">
    <property type="nucleotide sequence ID" value="XM_006257093.3"/>
</dbReference>
<dbReference type="RefSeq" id="XP_006257156.1">
    <property type="nucleotide sequence ID" value="XM_006257094.3"/>
</dbReference>
<dbReference type="RefSeq" id="XP_006257157.1">
    <property type="nucleotide sequence ID" value="XM_006257095.3"/>
</dbReference>
<dbReference type="RefSeq" id="XP_017457635.1">
    <property type="nucleotide sequence ID" value="XM_017602146.1"/>
</dbReference>
<dbReference type="RefSeq" id="XP_017457636.1">
    <property type="nucleotide sequence ID" value="XM_017602147.1"/>
</dbReference>
<dbReference type="RefSeq" id="XP_038955933.1">
    <property type="nucleotide sequence ID" value="XM_039100005.2"/>
</dbReference>
<dbReference type="RefSeq" id="XP_038955934.1">
    <property type="nucleotide sequence ID" value="XM_039100006.2"/>
</dbReference>
<dbReference type="RefSeq" id="XP_038955935.1">
    <property type="nucleotide sequence ID" value="XM_039100007.2"/>
</dbReference>
<dbReference type="RefSeq" id="XP_038955937.1">
    <property type="nucleotide sequence ID" value="XM_039100009.2"/>
</dbReference>
<dbReference type="RefSeq" id="XP_038955939.1">
    <property type="nucleotide sequence ID" value="XM_039100011.2"/>
</dbReference>
<dbReference type="RefSeq" id="XP_038955940.1">
    <property type="nucleotide sequence ID" value="XM_039100012.2"/>
</dbReference>
<dbReference type="RefSeq" id="XP_038955942.1">
    <property type="nucleotide sequence ID" value="XM_039100014.2"/>
</dbReference>
<dbReference type="RefSeq" id="XP_038955943.1">
    <property type="nucleotide sequence ID" value="XM_039100015.2"/>
</dbReference>
<dbReference type="RefSeq" id="XP_063136343.1">
    <property type="nucleotide sequence ID" value="XM_063280273.1"/>
</dbReference>
<dbReference type="RefSeq" id="XP_063136344.1">
    <property type="nucleotide sequence ID" value="XM_063280274.1"/>
</dbReference>
<dbReference type="RefSeq" id="XP_063136345.1">
    <property type="nucleotide sequence ID" value="XM_063280275.1"/>
</dbReference>
<dbReference type="RefSeq" id="XP_063136346.1">
    <property type="nucleotide sequence ID" value="XM_063280276.1"/>
</dbReference>
<dbReference type="SMR" id="O35811"/>
<dbReference type="CORUM" id="O35811"/>
<dbReference type="FunCoup" id="O35811">
    <property type="interactions" value="212"/>
</dbReference>
<dbReference type="STRING" id="10116.ENSRNOP00000039027"/>
<dbReference type="BindingDB" id="O35811"/>
<dbReference type="ChEMBL" id="CHEMBL2124"/>
<dbReference type="DrugCentral" id="O35811"/>
<dbReference type="GuidetoPHARMACOLOGY" id="325"/>
<dbReference type="GlyCosmos" id="O35811">
    <property type="glycosylation" value="1 site, No reported glycans"/>
</dbReference>
<dbReference type="GlyGen" id="O35811">
    <property type="glycosylation" value="1 site"/>
</dbReference>
<dbReference type="PhosphoSitePlus" id="O35811"/>
<dbReference type="PaxDb" id="10116-ENSRNOP00000039027"/>
<dbReference type="Ensembl" id="ENSRNOT00000045907.3">
    <property type="protein sequence ID" value="ENSRNOP00000039027.2"/>
    <property type="gene ID" value="ENSRNOG00000070777.1"/>
</dbReference>
<dbReference type="Ensembl" id="ENSRNOT00000096316.1">
    <property type="protein sequence ID" value="ENSRNOP00000094459.1"/>
    <property type="gene ID" value="ENSRNOG00000070777.1"/>
</dbReference>
<dbReference type="Ensembl" id="ENSRNOT00000099755.1">
    <property type="protein sequence ID" value="ENSRNOP00000085052.1"/>
    <property type="gene ID" value="ENSRNOG00000070777.1"/>
</dbReference>
<dbReference type="Ensembl" id="ENSRNOT00000112073.1">
    <property type="protein sequence ID" value="ENSRNOP00000082634.1"/>
    <property type="gene ID" value="ENSRNOG00000070777.1"/>
</dbReference>
<dbReference type="GeneID" id="63843"/>
<dbReference type="KEGG" id="rno:63843"/>
<dbReference type="UCSC" id="RGD:61798">
    <property type="organism name" value="rat"/>
</dbReference>
<dbReference type="AGR" id="RGD:61798"/>
<dbReference type="CTD" id="5030"/>
<dbReference type="RGD" id="61798">
    <property type="gene designation" value="P2ry4"/>
</dbReference>
<dbReference type="eggNOG" id="ENOG502QSTF">
    <property type="taxonomic scope" value="Eukaryota"/>
</dbReference>
<dbReference type="GeneTree" id="ENSGT01030000234621"/>
<dbReference type="HOGENOM" id="CLU_009579_8_2_1"/>
<dbReference type="InParanoid" id="O35811"/>
<dbReference type="OMA" id="TRTIYYM"/>
<dbReference type="OrthoDB" id="10018446at2759"/>
<dbReference type="PhylomeDB" id="O35811"/>
<dbReference type="TreeFam" id="TF350009"/>
<dbReference type="Reactome" id="R-RNO-417957">
    <property type="pathway name" value="P2Y receptors"/>
</dbReference>
<dbReference type="Reactome" id="R-RNO-418594">
    <property type="pathway name" value="G alpha (i) signalling events"/>
</dbReference>
<dbReference type="PRO" id="PR:O35811"/>
<dbReference type="Proteomes" id="UP000002494">
    <property type="component" value="Chromosome X"/>
</dbReference>
<dbReference type="Bgee" id="ENSRNOG00000002953">
    <property type="expression patterns" value="Expressed in esophagus and 17 other cell types or tissues"/>
</dbReference>
<dbReference type="GO" id="GO:0016324">
    <property type="term" value="C:apical plasma membrane"/>
    <property type="evidence" value="ECO:0000314"/>
    <property type="project" value="RGD"/>
</dbReference>
<dbReference type="GO" id="GO:0016323">
    <property type="term" value="C:basolateral plasma membrane"/>
    <property type="evidence" value="ECO:0000314"/>
    <property type="project" value="RGD"/>
</dbReference>
<dbReference type="GO" id="GO:0098978">
    <property type="term" value="C:glutamatergic synapse"/>
    <property type="evidence" value="ECO:0000314"/>
    <property type="project" value="SynGO"/>
</dbReference>
<dbReference type="GO" id="GO:0005886">
    <property type="term" value="C:plasma membrane"/>
    <property type="evidence" value="ECO:0000318"/>
    <property type="project" value="GO_Central"/>
</dbReference>
<dbReference type="GO" id="GO:0048787">
    <property type="term" value="C:presynaptic active zone membrane"/>
    <property type="evidence" value="ECO:0000314"/>
    <property type="project" value="SynGO"/>
</dbReference>
<dbReference type="GO" id="GO:0005524">
    <property type="term" value="F:ATP binding"/>
    <property type="evidence" value="ECO:0000314"/>
    <property type="project" value="RGD"/>
</dbReference>
<dbReference type="GO" id="GO:0045028">
    <property type="term" value="F:G protein-coupled purinergic nucleotide receptor activity"/>
    <property type="evidence" value="ECO:0007669"/>
    <property type="project" value="InterPro"/>
</dbReference>
<dbReference type="GO" id="GO:0045030">
    <property type="term" value="F:G protein-coupled UTP receptor activity"/>
    <property type="evidence" value="ECO:0000266"/>
    <property type="project" value="RGD"/>
</dbReference>
<dbReference type="GO" id="GO:0071380">
    <property type="term" value="P:cellular response to prostaglandin E stimulus"/>
    <property type="evidence" value="ECO:0000266"/>
    <property type="project" value="RGD"/>
</dbReference>
<dbReference type="GO" id="GO:0007186">
    <property type="term" value="P:G protein-coupled receptor signaling pathway"/>
    <property type="evidence" value="ECO:0000318"/>
    <property type="project" value="GO_Central"/>
</dbReference>
<dbReference type="GO" id="GO:0099509">
    <property type="term" value="P:regulation of presynaptic cytosolic calcium ion concentration"/>
    <property type="evidence" value="ECO:0000314"/>
    <property type="project" value="SynGO"/>
</dbReference>
<dbReference type="GO" id="GO:2000300">
    <property type="term" value="P:regulation of synaptic vesicle exocytosis"/>
    <property type="evidence" value="ECO:0000314"/>
    <property type="project" value="SynGO"/>
</dbReference>
<dbReference type="GO" id="GO:0030321">
    <property type="term" value="P:transepithelial chloride transport"/>
    <property type="evidence" value="ECO:0000266"/>
    <property type="project" value="RGD"/>
</dbReference>
<dbReference type="CDD" id="cd15374">
    <property type="entry name" value="7tmA_P2Y4"/>
    <property type="match status" value="1"/>
</dbReference>
<dbReference type="FunFam" id="1.20.1070.10:FF:000017">
    <property type="entry name" value="lysophosphatidic acid receptor 4"/>
    <property type="match status" value="1"/>
</dbReference>
<dbReference type="Gene3D" id="1.20.1070.10">
    <property type="entry name" value="Rhodopsin 7-helix transmembrane proteins"/>
    <property type="match status" value="1"/>
</dbReference>
<dbReference type="InterPro" id="IPR000276">
    <property type="entry name" value="GPCR_Rhodpsn"/>
</dbReference>
<dbReference type="InterPro" id="IPR017452">
    <property type="entry name" value="GPCR_Rhodpsn_7TM"/>
</dbReference>
<dbReference type="InterPro" id="IPR000018">
    <property type="entry name" value="P2Y4"/>
</dbReference>
<dbReference type="PANTHER" id="PTHR24231:SF21">
    <property type="entry name" value="P2Y PURINOCEPTOR 4"/>
    <property type="match status" value="1"/>
</dbReference>
<dbReference type="PANTHER" id="PTHR24231">
    <property type="entry name" value="PURINOCEPTOR-RELATED G-PROTEIN COUPLED RECEPTOR"/>
    <property type="match status" value="1"/>
</dbReference>
<dbReference type="Pfam" id="PF00001">
    <property type="entry name" value="7tm_1"/>
    <property type="match status" value="1"/>
</dbReference>
<dbReference type="PRINTS" id="PR00237">
    <property type="entry name" value="GPCRRHODOPSN"/>
</dbReference>
<dbReference type="PRINTS" id="PR01066">
    <property type="entry name" value="P2Y4PRNOCPTR"/>
</dbReference>
<dbReference type="PRINTS" id="PR01157">
    <property type="entry name" value="P2YPURNOCPTR"/>
</dbReference>
<dbReference type="SUPFAM" id="SSF81321">
    <property type="entry name" value="Family A G protein-coupled receptor-like"/>
    <property type="match status" value="1"/>
</dbReference>
<dbReference type="PROSITE" id="PS00237">
    <property type="entry name" value="G_PROTEIN_RECEP_F1_1"/>
    <property type="match status" value="1"/>
</dbReference>
<dbReference type="PROSITE" id="PS50262">
    <property type="entry name" value="G_PROTEIN_RECEP_F1_2"/>
    <property type="match status" value="1"/>
</dbReference>
<proteinExistence type="evidence at transcript level"/>
<protein>
    <recommendedName>
        <fullName>P2Y purinoceptor 4</fullName>
        <shortName>P2Y4</shortName>
    </recommendedName>
</protein>
<sequence length="361" mass="40894">MTSAESLLFTSLGPSPSSGDGDCRFNEEFKFILLPMSYAVVFVLGLALNAPTLWLFLFRLRPWDATATYMFHLALSDTLYVLSLPTLVYYYAARNHWPFGTGLCKFVRFLFYWNLYCSVLFLTCISVHRYLGICHPLRAIRWGRPRFASLLCLGVWLVVAGCLVPNLFFVTTNANGTTILCHDTTLPEEFDHYVYFSSAVMVLLFGLPFLITLVCYGLMARRLYRPLPGAGQSSSRLRSLRTIAVVLTVFAVCFVPFHITRTIYYQARLLQADCHVLNIVNVVYKVTRPLASANSCLDPVLYLFTGDKYRNQLQQLCRGSKPKPRTAASSLALVTLHEESISRWADTHQDSTFSAYEGDRL</sequence>
<name>P2RY4_RAT</name>
<accession>O35811</accession>
<keyword id="KW-1003">Cell membrane</keyword>
<keyword id="KW-1015">Disulfide bond</keyword>
<keyword id="KW-0297">G-protein coupled receptor</keyword>
<keyword id="KW-0325">Glycoprotein</keyword>
<keyword id="KW-0472">Membrane</keyword>
<keyword id="KW-0597">Phosphoprotein</keyword>
<keyword id="KW-0675">Receptor</keyword>
<keyword id="KW-1185">Reference proteome</keyword>
<keyword id="KW-0807">Transducer</keyword>
<keyword id="KW-0812">Transmembrane</keyword>
<keyword id="KW-1133">Transmembrane helix</keyword>
<evidence type="ECO:0000250" key="1"/>
<evidence type="ECO:0000255" key="2"/>
<evidence type="ECO:0000255" key="3">
    <source>
        <dbReference type="PROSITE-ProRule" id="PRU00521"/>
    </source>
</evidence>
<evidence type="ECO:0000256" key="4">
    <source>
        <dbReference type="SAM" id="MobiDB-lite"/>
    </source>
</evidence>
<gene>
    <name type="primary">P2ry4</name>
    <name type="synonym">P2y4</name>
</gene>
<organism>
    <name type="scientific">Rattus norvegicus</name>
    <name type="common">Rat</name>
    <dbReference type="NCBI Taxonomy" id="10116"/>
    <lineage>
        <taxon>Eukaryota</taxon>
        <taxon>Metazoa</taxon>
        <taxon>Chordata</taxon>
        <taxon>Craniata</taxon>
        <taxon>Vertebrata</taxon>
        <taxon>Euteleostomi</taxon>
        <taxon>Mammalia</taxon>
        <taxon>Eutheria</taxon>
        <taxon>Euarchontoglires</taxon>
        <taxon>Glires</taxon>
        <taxon>Rodentia</taxon>
        <taxon>Myomorpha</taxon>
        <taxon>Muroidea</taxon>
        <taxon>Muridae</taxon>
        <taxon>Murinae</taxon>
        <taxon>Rattus</taxon>
    </lineage>
</organism>
<feature type="chain" id="PRO_0000070023" description="P2Y purinoceptor 4">
    <location>
        <begin position="1"/>
        <end position="361"/>
    </location>
</feature>
<feature type="topological domain" description="Extracellular" evidence="2">
    <location>
        <begin position="1"/>
        <end position="30"/>
    </location>
</feature>
<feature type="transmembrane region" description="Helical; Name=1" evidence="2">
    <location>
        <begin position="31"/>
        <end position="58"/>
    </location>
</feature>
<feature type="topological domain" description="Cytoplasmic" evidence="2">
    <location>
        <begin position="59"/>
        <end position="68"/>
    </location>
</feature>
<feature type="transmembrane region" description="Helical; Name=2" evidence="2">
    <location>
        <begin position="69"/>
        <end position="91"/>
    </location>
</feature>
<feature type="topological domain" description="Extracellular" evidence="2">
    <location>
        <begin position="92"/>
        <end position="108"/>
    </location>
</feature>
<feature type="transmembrane region" description="Helical; Name=3" evidence="2">
    <location>
        <begin position="109"/>
        <end position="127"/>
    </location>
</feature>
<feature type="topological domain" description="Cytoplasmic" evidence="2">
    <location>
        <begin position="128"/>
        <end position="149"/>
    </location>
</feature>
<feature type="transmembrane region" description="Helical; Name=4" evidence="2">
    <location>
        <begin position="150"/>
        <end position="170"/>
    </location>
</feature>
<feature type="topological domain" description="Extracellular" evidence="2">
    <location>
        <begin position="171"/>
        <end position="192"/>
    </location>
</feature>
<feature type="transmembrane region" description="Helical; Name=5" evidence="2">
    <location>
        <begin position="193"/>
        <end position="218"/>
    </location>
</feature>
<feature type="topological domain" description="Cytoplasmic" evidence="2">
    <location>
        <begin position="219"/>
        <end position="242"/>
    </location>
</feature>
<feature type="transmembrane region" description="Helical; Name=6" evidence="2">
    <location>
        <begin position="243"/>
        <end position="265"/>
    </location>
</feature>
<feature type="topological domain" description="Extracellular" evidence="2">
    <location>
        <begin position="266"/>
        <end position="283"/>
    </location>
</feature>
<feature type="transmembrane region" description="Helical; Name=7" evidence="2">
    <location>
        <begin position="284"/>
        <end position="305"/>
    </location>
</feature>
<feature type="topological domain" description="Cytoplasmic" evidence="2">
    <location>
        <begin position="306"/>
        <end position="361"/>
    </location>
</feature>
<feature type="region of interest" description="Disordered" evidence="4">
    <location>
        <begin position="1"/>
        <end position="20"/>
    </location>
</feature>
<feature type="glycosylation site" description="N-linked (GlcNAc...) asparagine" evidence="2">
    <location>
        <position position="175"/>
    </location>
</feature>
<feature type="disulfide bond" evidence="3">
    <location>
        <begin position="104"/>
        <end position="181"/>
    </location>
</feature>
<reference key="1">
    <citation type="submission" date="1997-08" db="EMBL/GenBank/DDBJ databases">
        <authorList>
            <person name="Bogdanov Y.D."/>
            <person name="Wildman S."/>
            <person name="King B.F."/>
            <person name="Burntock G."/>
        </authorList>
    </citation>
    <scope>NUCLEOTIDE SEQUENCE [GENOMIC DNA]</scope>
    <source>
        <strain>Sprague-Dawley</strain>
        <tissue>Liver</tissue>
    </source>
</reference>
<reference key="2">
    <citation type="journal article" date="1998" name="J. Neurochem.">
        <title>Molecular cloning and characterization of the rat P2Y4 receptor.</title>
        <authorList>
            <person name="Webb T.E."/>
            <person name="Henderson D."/>
            <person name="Roberts J.A."/>
            <person name="Barnard E.A."/>
        </authorList>
    </citation>
    <scope>NUCLEOTIDE SEQUENCE [MRNA]</scope>
    <source>
        <strain>Sprague-Dawley</strain>
        <tissue>Brain</tissue>
    </source>
</reference>
<comment type="function">
    <text>Receptor for ATP and UTP coupled to G-proteins that activate a phosphatidylinositol-calcium second messenger system. Not activated by ADP or UDP.</text>
</comment>
<comment type="subcellular location">
    <subcellularLocation>
        <location>Cell membrane</location>
        <topology>Multi-pass membrane protein</topology>
    </subcellularLocation>
</comment>
<comment type="tissue specificity">
    <text>Widely expressed at low levels. In brain, higher expression in the pineal gland and ventricular system.</text>
</comment>
<comment type="PTM">
    <text evidence="1">Phosphorylation of Ser-329 and Ser-330 is a key step in agonist-dependent desensitization and loss of surface P2RY4. This phosphorylation does not involve PKC, nor other calcium-activated kinases (By similarity).</text>
</comment>
<comment type="similarity">
    <text evidence="3">Belongs to the G-protein coupled receptor 1 family.</text>
</comment>